<gene>
    <name evidence="1" type="primary">leuD</name>
    <name type="ordered locus">LBL_1372</name>
</gene>
<dbReference type="EC" id="4.2.1.33" evidence="1"/>
<dbReference type="EMBL" id="CP000348">
    <property type="protein sequence ID" value="ABJ78862.1"/>
    <property type="molecule type" value="Genomic_DNA"/>
</dbReference>
<dbReference type="RefSeq" id="WP_011670073.1">
    <property type="nucleotide sequence ID" value="NC_008508.1"/>
</dbReference>
<dbReference type="SMR" id="Q051Y3"/>
<dbReference type="KEGG" id="lbl:LBL_1372"/>
<dbReference type="PATRIC" id="fig|355276.3.peg.1738"/>
<dbReference type="HOGENOM" id="CLU_081378_0_3_12"/>
<dbReference type="UniPathway" id="UPA00048">
    <property type="reaction ID" value="UER00071"/>
</dbReference>
<dbReference type="GO" id="GO:0009316">
    <property type="term" value="C:3-isopropylmalate dehydratase complex"/>
    <property type="evidence" value="ECO:0007669"/>
    <property type="project" value="InterPro"/>
</dbReference>
<dbReference type="GO" id="GO:0003861">
    <property type="term" value="F:3-isopropylmalate dehydratase activity"/>
    <property type="evidence" value="ECO:0007669"/>
    <property type="project" value="UniProtKB-UniRule"/>
</dbReference>
<dbReference type="GO" id="GO:0009098">
    <property type="term" value="P:L-leucine biosynthetic process"/>
    <property type="evidence" value="ECO:0007669"/>
    <property type="project" value="UniProtKB-UniRule"/>
</dbReference>
<dbReference type="CDD" id="cd01577">
    <property type="entry name" value="IPMI_Swivel"/>
    <property type="match status" value="1"/>
</dbReference>
<dbReference type="FunFam" id="3.20.19.10:FF:000003">
    <property type="entry name" value="3-isopropylmalate dehydratase small subunit"/>
    <property type="match status" value="1"/>
</dbReference>
<dbReference type="Gene3D" id="3.20.19.10">
    <property type="entry name" value="Aconitase, domain 4"/>
    <property type="match status" value="1"/>
</dbReference>
<dbReference type="HAMAP" id="MF_01031">
    <property type="entry name" value="LeuD_type1"/>
    <property type="match status" value="1"/>
</dbReference>
<dbReference type="InterPro" id="IPR004431">
    <property type="entry name" value="3-IsopropMal_deHydase_ssu"/>
</dbReference>
<dbReference type="InterPro" id="IPR015928">
    <property type="entry name" value="Aconitase/3IPM_dehydase_swvl"/>
</dbReference>
<dbReference type="InterPro" id="IPR000573">
    <property type="entry name" value="AconitaseA/IPMdHydase_ssu_swvl"/>
</dbReference>
<dbReference type="InterPro" id="IPR033940">
    <property type="entry name" value="IPMI_Swivel"/>
</dbReference>
<dbReference type="InterPro" id="IPR050075">
    <property type="entry name" value="LeuD"/>
</dbReference>
<dbReference type="NCBIfam" id="TIGR00171">
    <property type="entry name" value="leuD"/>
    <property type="match status" value="1"/>
</dbReference>
<dbReference type="NCBIfam" id="NF002458">
    <property type="entry name" value="PRK01641.1"/>
    <property type="match status" value="1"/>
</dbReference>
<dbReference type="PANTHER" id="PTHR43345:SF5">
    <property type="entry name" value="3-ISOPROPYLMALATE DEHYDRATASE SMALL SUBUNIT"/>
    <property type="match status" value="1"/>
</dbReference>
<dbReference type="PANTHER" id="PTHR43345">
    <property type="entry name" value="3-ISOPROPYLMALATE DEHYDRATASE SMALL SUBUNIT 2-RELATED-RELATED"/>
    <property type="match status" value="1"/>
</dbReference>
<dbReference type="Pfam" id="PF00694">
    <property type="entry name" value="Aconitase_C"/>
    <property type="match status" value="1"/>
</dbReference>
<dbReference type="SUPFAM" id="SSF52016">
    <property type="entry name" value="LeuD/IlvD-like"/>
    <property type="match status" value="1"/>
</dbReference>
<accession>Q051Y3</accession>
<protein>
    <recommendedName>
        <fullName evidence="1">3-isopropylmalate dehydratase small subunit</fullName>
        <ecNumber evidence="1">4.2.1.33</ecNumber>
    </recommendedName>
    <alternativeName>
        <fullName evidence="1">Alpha-IPM isomerase</fullName>
        <shortName evidence="1">IPMI</shortName>
    </alternativeName>
    <alternativeName>
        <fullName evidence="1">Isopropylmalate isomerase</fullName>
    </alternativeName>
</protein>
<organism>
    <name type="scientific">Leptospira borgpetersenii serovar Hardjo-bovis (strain L550)</name>
    <dbReference type="NCBI Taxonomy" id="355276"/>
    <lineage>
        <taxon>Bacteria</taxon>
        <taxon>Pseudomonadati</taxon>
        <taxon>Spirochaetota</taxon>
        <taxon>Spirochaetia</taxon>
        <taxon>Leptospirales</taxon>
        <taxon>Leptospiraceae</taxon>
        <taxon>Leptospira</taxon>
    </lineage>
</organism>
<feature type="chain" id="PRO_1000063779" description="3-isopropylmalate dehydratase small subunit">
    <location>
        <begin position="1"/>
        <end position="206"/>
    </location>
</feature>
<reference key="1">
    <citation type="journal article" date="2006" name="Proc. Natl. Acad. Sci. U.S.A.">
        <title>Genome reduction in Leptospira borgpetersenii reflects limited transmission potential.</title>
        <authorList>
            <person name="Bulach D.M."/>
            <person name="Zuerner R.L."/>
            <person name="Wilson P."/>
            <person name="Seemann T."/>
            <person name="McGrath A."/>
            <person name="Cullen P.A."/>
            <person name="Davis J."/>
            <person name="Johnson M."/>
            <person name="Kuczek E."/>
            <person name="Alt D.P."/>
            <person name="Peterson-Burch B."/>
            <person name="Coppel R.L."/>
            <person name="Rood J.I."/>
            <person name="Davies J.K."/>
            <person name="Adler B."/>
        </authorList>
    </citation>
    <scope>NUCLEOTIDE SEQUENCE [LARGE SCALE GENOMIC DNA]</scope>
    <source>
        <strain>L550</strain>
    </source>
</reference>
<sequence>MKPFTVLNGIAALLDRPNVDTDQIIPKQFLRKIERTGFGVHLFHDWRYLDDAGTKLNPEFSLNQERYKGASILLTRDNFGCGSSREHAPWALEDYGFRSIIAPSYADIFFNNCFKNGMLPVVLKSEEVEELFRSVSGNVGAKLQIDLDKQTVTGPTGKVYTFEVDSFRKYCLYNGLDDIGLTLKQGSKIGAFEKKQKEVEPWLYVI</sequence>
<keyword id="KW-0028">Amino-acid biosynthesis</keyword>
<keyword id="KW-0100">Branched-chain amino acid biosynthesis</keyword>
<keyword id="KW-0432">Leucine biosynthesis</keyword>
<keyword id="KW-0456">Lyase</keyword>
<proteinExistence type="inferred from homology"/>
<comment type="function">
    <text evidence="1">Catalyzes the isomerization between 2-isopropylmalate and 3-isopropylmalate, via the formation of 2-isopropylmaleate.</text>
</comment>
<comment type="catalytic activity">
    <reaction evidence="1">
        <text>(2R,3S)-3-isopropylmalate = (2S)-2-isopropylmalate</text>
        <dbReference type="Rhea" id="RHEA:32287"/>
        <dbReference type="ChEBI" id="CHEBI:1178"/>
        <dbReference type="ChEBI" id="CHEBI:35121"/>
        <dbReference type="EC" id="4.2.1.33"/>
    </reaction>
</comment>
<comment type="pathway">
    <text evidence="1">Amino-acid biosynthesis; L-leucine biosynthesis; L-leucine from 3-methyl-2-oxobutanoate: step 2/4.</text>
</comment>
<comment type="subunit">
    <text evidence="1">Heterodimer of LeuC and LeuD.</text>
</comment>
<comment type="similarity">
    <text evidence="1">Belongs to the LeuD family. LeuD type 1 subfamily.</text>
</comment>
<name>LEUD_LEPBL</name>
<evidence type="ECO:0000255" key="1">
    <source>
        <dbReference type="HAMAP-Rule" id="MF_01031"/>
    </source>
</evidence>